<feature type="chain" id="PRO_1000149662" description="tRNA (guanine-N(7)-)-methyltransferase">
    <location>
        <begin position="1"/>
        <end position="238"/>
    </location>
</feature>
<feature type="active site" evidence="1">
    <location>
        <position position="143"/>
    </location>
</feature>
<feature type="binding site" evidence="2">
    <location>
        <position position="68"/>
    </location>
    <ligand>
        <name>S-adenosyl-L-methionine</name>
        <dbReference type="ChEBI" id="CHEBI:59789"/>
    </ligand>
</feature>
<feature type="binding site" evidence="2">
    <location>
        <position position="93"/>
    </location>
    <ligand>
        <name>S-adenosyl-L-methionine</name>
        <dbReference type="ChEBI" id="CHEBI:59789"/>
    </ligand>
</feature>
<feature type="binding site" evidence="2">
    <location>
        <position position="120"/>
    </location>
    <ligand>
        <name>S-adenosyl-L-methionine</name>
        <dbReference type="ChEBI" id="CHEBI:59789"/>
    </ligand>
</feature>
<feature type="binding site" evidence="2">
    <location>
        <position position="143"/>
    </location>
    <ligand>
        <name>S-adenosyl-L-methionine</name>
        <dbReference type="ChEBI" id="CHEBI:59789"/>
    </ligand>
</feature>
<feature type="binding site" evidence="2">
    <location>
        <position position="147"/>
    </location>
    <ligand>
        <name>substrate</name>
    </ligand>
</feature>
<feature type="binding site" evidence="2">
    <location>
        <position position="179"/>
    </location>
    <ligand>
        <name>substrate</name>
    </ligand>
</feature>
<feature type="binding site" evidence="2">
    <location>
        <begin position="216"/>
        <end position="219"/>
    </location>
    <ligand>
        <name>substrate</name>
    </ligand>
</feature>
<name>TRMB_SHEWM</name>
<sequence>MSDVTTAEFNEEGKYLRKVRSFVLREGRLTKGQATAMEEQWPLMGLDYSPEPLDLAEIFGREADTVLEIGFGMGASLVEMAKASPELNFIGIEVHKPGVGACLSVAAEAGVTNLRVFHHDAIEVLENSIVPSSLARVQLFFPDPWHKKRHHKRRIVQPEFAQTIRNSLKLGGVFHLATDWENYSEHMLEVMNAAPGYKNQSTTGDVVERPDHRPLTKFEARGHRLGHGVWDIMFERID</sequence>
<organism>
    <name type="scientific">Shewanella woodyi (strain ATCC 51908 / MS32)</name>
    <dbReference type="NCBI Taxonomy" id="392500"/>
    <lineage>
        <taxon>Bacteria</taxon>
        <taxon>Pseudomonadati</taxon>
        <taxon>Pseudomonadota</taxon>
        <taxon>Gammaproteobacteria</taxon>
        <taxon>Alteromonadales</taxon>
        <taxon>Shewanellaceae</taxon>
        <taxon>Shewanella</taxon>
    </lineage>
</organism>
<keyword id="KW-0489">Methyltransferase</keyword>
<keyword id="KW-1185">Reference proteome</keyword>
<keyword id="KW-0949">S-adenosyl-L-methionine</keyword>
<keyword id="KW-0808">Transferase</keyword>
<keyword id="KW-0819">tRNA processing</keyword>
<dbReference type="EC" id="2.1.1.33" evidence="2"/>
<dbReference type="EMBL" id="CP000961">
    <property type="protein sequence ID" value="ACA85612.1"/>
    <property type="molecule type" value="Genomic_DNA"/>
</dbReference>
<dbReference type="RefSeq" id="WP_012323958.1">
    <property type="nucleotide sequence ID" value="NC_010506.1"/>
</dbReference>
<dbReference type="SMR" id="B1KIW4"/>
<dbReference type="STRING" id="392500.Swoo_1320"/>
<dbReference type="KEGG" id="swd:Swoo_1320"/>
<dbReference type="eggNOG" id="COG0220">
    <property type="taxonomic scope" value="Bacteria"/>
</dbReference>
<dbReference type="HOGENOM" id="CLU_050910_0_1_6"/>
<dbReference type="UniPathway" id="UPA00989"/>
<dbReference type="Proteomes" id="UP000002168">
    <property type="component" value="Chromosome"/>
</dbReference>
<dbReference type="GO" id="GO:0043527">
    <property type="term" value="C:tRNA methyltransferase complex"/>
    <property type="evidence" value="ECO:0007669"/>
    <property type="project" value="TreeGrafter"/>
</dbReference>
<dbReference type="GO" id="GO:0008176">
    <property type="term" value="F:tRNA (guanine(46)-N7)-methyltransferase activity"/>
    <property type="evidence" value="ECO:0007669"/>
    <property type="project" value="UniProtKB-UniRule"/>
</dbReference>
<dbReference type="CDD" id="cd02440">
    <property type="entry name" value="AdoMet_MTases"/>
    <property type="match status" value="1"/>
</dbReference>
<dbReference type="FunFam" id="3.40.50.150:FF:000024">
    <property type="entry name" value="tRNA (guanine-N(7)-)-methyltransferase"/>
    <property type="match status" value="1"/>
</dbReference>
<dbReference type="Gene3D" id="3.40.50.150">
    <property type="entry name" value="Vaccinia Virus protein VP39"/>
    <property type="match status" value="1"/>
</dbReference>
<dbReference type="HAMAP" id="MF_01057">
    <property type="entry name" value="tRNA_methyltr_TrmB"/>
    <property type="match status" value="1"/>
</dbReference>
<dbReference type="InterPro" id="IPR029063">
    <property type="entry name" value="SAM-dependent_MTases_sf"/>
</dbReference>
<dbReference type="InterPro" id="IPR003358">
    <property type="entry name" value="tRNA_(Gua-N-7)_MeTrfase_Trmb"/>
</dbReference>
<dbReference type="InterPro" id="IPR055361">
    <property type="entry name" value="tRNA_methyltr_TrmB_bact"/>
</dbReference>
<dbReference type="NCBIfam" id="TIGR00091">
    <property type="entry name" value="tRNA (guanosine(46)-N7)-methyltransferase TrmB"/>
    <property type="match status" value="1"/>
</dbReference>
<dbReference type="PANTHER" id="PTHR23417">
    <property type="entry name" value="3-DEOXY-D-MANNO-OCTULOSONIC-ACID TRANSFERASE/TRNA GUANINE-N 7 - -METHYLTRANSFERASE"/>
    <property type="match status" value="1"/>
</dbReference>
<dbReference type="PANTHER" id="PTHR23417:SF14">
    <property type="entry name" value="PENTACOTRIPEPTIDE-REPEAT REGION OF PRORP DOMAIN-CONTAINING PROTEIN"/>
    <property type="match status" value="1"/>
</dbReference>
<dbReference type="Pfam" id="PF02390">
    <property type="entry name" value="Methyltransf_4"/>
    <property type="match status" value="1"/>
</dbReference>
<dbReference type="SUPFAM" id="SSF53335">
    <property type="entry name" value="S-adenosyl-L-methionine-dependent methyltransferases"/>
    <property type="match status" value="1"/>
</dbReference>
<dbReference type="PROSITE" id="PS51625">
    <property type="entry name" value="SAM_MT_TRMB"/>
    <property type="match status" value="1"/>
</dbReference>
<evidence type="ECO:0000250" key="1"/>
<evidence type="ECO:0000255" key="2">
    <source>
        <dbReference type="HAMAP-Rule" id="MF_01057"/>
    </source>
</evidence>
<accession>B1KIW4</accession>
<gene>
    <name evidence="2" type="primary">trmB</name>
    <name type="ordered locus">Swoo_1320</name>
</gene>
<proteinExistence type="inferred from homology"/>
<comment type="function">
    <text evidence="2">Catalyzes the formation of N(7)-methylguanine at position 46 (m7G46) in tRNA.</text>
</comment>
<comment type="catalytic activity">
    <reaction evidence="2">
        <text>guanosine(46) in tRNA + S-adenosyl-L-methionine = N(7)-methylguanosine(46) in tRNA + S-adenosyl-L-homocysteine</text>
        <dbReference type="Rhea" id="RHEA:42708"/>
        <dbReference type="Rhea" id="RHEA-COMP:10188"/>
        <dbReference type="Rhea" id="RHEA-COMP:10189"/>
        <dbReference type="ChEBI" id="CHEBI:57856"/>
        <dbReference type="ChEBI" id="CHEBI:59789"/>
        <dbReference type="ChEBI" id="CHEBI:74269"/>
        <dbReference type="ChEBI" id="CHEBI:74480"/>
        <dbReference type="EC" id="2.1.1.33"/>
    </reaction>
</comment>
<comment type="pathway">
    <text evidence="2">tRNA modification; N(7)-methylguanine-tRNA biosynthesis.</text>
</comment>
<comment type="similarity">
    <text evidence="2">Belongs to the class I-like SAM-binding methyltransferase superfamily. TrmB family.</text>
</comment>
<reference key="1">
    <citation type="submission" date="2008-02" db="EMBL/GenBank/DDBJ databases">
        <title>Complete sequence of Shewanella woodyi ATCC 51908.</title>
        <authorList>
            <consortium name="US DOE Joint Genome Institute"/>
            <person name="Copeland A."/>
            <person name="Lucas S."/>
            <person name="Lapidus A."/>
            <person name="Glavina del Rio T."/>
            <person name="Dalin E."/>
            <person name="Tice H."/>
            <person name="Bruce D."/>
            <person name="Goodwin L."/>
            <person name="Pitluck S."/>
            <person name="Sims D."/>
            <person name="Brettin T."/>
            <person name="Detter J.C."/>
            <person name="Han C."/>
            <person name="Kuske C.R."/>
            <person name="Schmutz J."/>
            <person name="Larimer F."/>
            <person name="Land M."/>
            <person name="Hauser L."/>
            <person name="Kyrpides N."/>
            <person name="Lykidis A."/>
            <person name="Zhao J.-S."/>
            <person name="Richardson P."/>
        </authorList>
    </citation>
    <scope>NUCLEOTIDE SEQUENCE [LARGE SCALE GENOMIC DNA]</scope>
    <source>
        <strain>ATCC 51908 / MS32</strain>
    </source>
</reference>
<protein>
    <recommendedName>
        <fullName evidence="2">tRNA (guanine-N(7)-)-methyltransferase</fullName>
        <ecNumber evidence="2">2.1.1.33</ecNumber>
    </recommendedName>
    <alternativeName>
        <fullName evidence="2">tRNA (guanine(46)-N(7))-methyltransferase</fullName>
    </alternativeName>
    <alternativeName>
        <fullName evidence="2">tRNA(m7G46)-methyltransferase</fullName>
    </alternativeName>
</protein>